<sequence length="273" mass="30189">MAAGVIRSVCDFRLPLPSHESFLPIDLEAPEISEEEEEEEEEEEEEEEEEEVDQDQQGEGSQGCGPDSQSSGVVPQDPSSPETPMQLLRFSELISGDIQRYFGRKDTGQDPDAQDIYADSQPASCSARDLYYADLVCLAQDGPPEDEEAAEFRMHLPGGPEGQVHRLGHRGDRVPPLGPLAELFDYGLRQFSRPRISACRRLRLERKYSHITPMTQRKLPPSFWKEPVPNPLGLLHVGTPDFSDLLASWSAEGGSELQSGGTQGLEGTQLAEV</sequence>
<organism>
    <name type="scientific">Mus musculus</name>
    <name type="common">Mouse</name>
    <dbReference type="NCBI Taxonomy" id="10090"/>
    <lineage>
        <taxon>Eukaryota</taxon>
        <taxon>Metazoa</taxon>
        <taxon>Chordata</taxon>
        <taxon>Craniata</taxon>
        <taxon>Vertebrata</taxon>
        <taxon>Euteleostomi</taxon>
        <taxon>Mammalia</taxon>
        <taxon>Eutheria</taxon>
        <taxon>Euarchontoglires</taxon>
        <taxon>Glires</taxon>
        <taxon>Rodentia</taxon>
        <taxon>Myomorpha</taxon>
        <taxon>Muroidea</taxon>
        <taxon>Muridae</taxon>
        <taxon>Murinae</taxon>
        <taxon>Mus</taxon>
        <taxon>Mus</taxon>
    </lineage>
</organism>
<evidence type="ECO:0000256" key="1">
    <source>
        <dbReference type="SAM" id="MobiDB-lite"/>
    </source>
</evidence>
<evidence type="ECO:0000269" key="2">
    <source>
    </source>
</evidence>
<evidence type="ECO:0000303" key="3">
    <source>
    </source>
</evidence>
<evidence type="ECO:0000305" key="4"/>
<evidence type="ECO:0000312" key="5">
    <source>
        <dbReference type="EMBL" id="AWQ13284.1"/>
    </source>
</evidence>
<evidence type="ECO:0000312" key="6">
    <source>
        <dbReference type="MGI" id="MGI:5621540"/>
    </source>
</evidence>
<reference key="1">
    <citation type="journal article" date="2019" name="Nature">
        <title>Noncoding deletions reveal a gene that is critical for intestinal function.</title>
        <authorList>
            <person name="Oz-Levi D."/>
            <person name="Olender T."/>
            <person name="Bar-Joseph I."/>
            <person name="Zhu Y."/>
            <person name="Marek-Yagel D."/>
            <person name="Barozzi I."/>
            <person name="Osterwalder M."/>
            <person name="Alkelai A."/>
            <person name="Ruzzo E.K."/>
            <person name="Han Y."/>
            <person name="Vos E.S.M."/>
            <person name="Reznik-Wolf H."/>
            <person name="Hartman C."/>
            <person name="Shamir R."/>
            <person name="Weiss B."/>
            <person name="Shapiro R."/>
            <person name="Pode-Shakked B."/>
            <person name="Tatarskyy P."/>
            <person name="Milgrom R."/>
            <person name="Schvimer M."/>
            <person name="Barshack I."/>
            <person name="Imai D.M."/>
            <person name="Coleman-Derr D."/>
            <person name="Dickel D.E."/>
            <person name="Nord A.S."/>
            <person name="Afzal V."/>
            <person name="van Bueren K.L."/>
            <person name="Barnes R.M."/>
            <person name="Black B.L."/>
            <person name="Mayhew C.N."/>
            <person name="Kuhar M.F."/>
            <person name="Pitstick A."/>
            <person name="Tekman M."/>
            <person name="Stanescu H.C."/>
            <person name="Wells J.M."/>
            <person name="Kleta R."/>
            <person name="de Laat W."/>
            <person name="Goldstein D.B."/>
            <person name="Pras E."/>
            <person name="Visel A."/>
            <person name="Lancet D."/>
            <person name="Anikster Y."/>
            <person name="Pennacchio L.A."/>
        </authorList>
    </citation>
    <scope>NUCLEOTIDE SEQUENCE [MRNA]</scope>
    <scope>FUNCTION</scope>
    <scope>TISSUE SPECIFICITY</scope>
    <scope>DISRUPTION PHENOTYPE</scope>
    <source>
        <tissue evidence="5">Stomach</tissue>
    </source>
</reference>
<reference key="2">
    <citation type="journal article" date="2009" name="PLoS Biol.">
        <title>Lineage-specific biology revealed by a finished genome assembly of the mouse.</title>
        <authorList>
            <person name="Church D.M."/>
            <person name="Goodstadt L."/>
            <person name="Hillier L.W."/>
            <person name="Zody M.C."/>
            <person name="Goldstein S."/>
            <person name="She X."/>
            <person name="Bult C.J."/>
            <person name="Agarwala R."/>
            <person name="Cherry J.L."/>
            <person name="DiCuccio M."/>
            <person name="Hlavina W."/>
            <person name="Kapustin Y."/>
            <person name="Meric P."/>
            <person name="Maglott D."/>
            <person name="Birtle Z."/>
            <person name="Marques A.C."/>
            <person name="Graves T."/>
            <person name="Zhou S."/>
            <person name="Teague B."/>
            <person name="Potamousis K."/>
            <person name="Churas C."/>
            <person name="Place M."/>
            <person name="Herschleb J."/>
            <person name="Runnheim R."/>
            <person name="Forrest D."/>
            <person name="Amos-Landgraf J."/>
            <person name="Schwartz D.C."/>
            <person name="Cheng Z."/>
            <person name="Lindblad-Toh K."/>
            <person name="Eichler E.E."/>
            <person name="Ponting C.P."/>
        </authorList>
    </citation>
    <scope>NUCLEOTIDE SEQUENCE [LARGE SCALE GENOMIC DNA]</scope>
    <source>
        <strain>C57BL/6J</strain>
    </source>
</reference>
<dbReference type="EMBL" id="KY964488">
    <property type="protein sequence ID" value="AWQ13284.1"/>
    <property type="molecule type" value="mRNA"/>
</dbReference>
<dbReference type="EMBL" id="AC130711">
    <property type="status" value="NOT_ANNOTATED_CDS"/>
    <property type="molecule type" value="Genomic_DNA"/>
</dbReference>
<dbReference type="CCDS" id="CCDS89018.1"/>
<dbReference type="RefSeq" id="NP_001357788.1">
    <property type="nucleotide sequence ID" value="NM_001370859.1"/>
</dbReference>
<dbReference type="RefSeq" id="NP_001357789.1">
    <property type="nucleotide sequence ID" value="NM_001370860.1"/>
</dbReference>
<dbReference type="RefSeq" id="XP_011245063.1">
    <property type="nucleotide sequence ID" value="XM_011246761.2"/>
</dbReference>
<dbReference type="Ensembl" id="ENSMUST00000224277.2">
    <property type="protein sequence ID" value="ENSMUSP00000153456.2"/>
    <property type="gene ID" value="ENSMUSG00000114245.2"/>
</dbReference>
<dbReference type="GeneID" id="102643076"/>
<dbReference type="AGR" id="MGI:5621540"/>
<dbReference type="MGI" id="MGI:5621540">
    <property type="gene designation" value="Percc1"/>
</dbReference>
<dbReference type="VEuPathDB" id="HostDB:ENSMUSG00000114245"/>
<dbReference type="GeneTree" id="ENSGT00390000002827"/>
<dbReference type="InParanoid" id="A0A286YDK6"/>
<dbReference type="OMA" id="SWSTEAC"/>
<dbReference type="OrthoDB" id="10065076at2759"/>
<dbReference type="PRO" id="PR:A0A286YDK6"/>
<dbReference type="Proteomes" id="UP000000589">
    <property type="component" value="Chromosome 17"/>
</dbReference>
<dbReference type="RNAct" id="A0A286YDK6">
    <property type="molecule type" value="protein"/>
</dbReference>
<dbReference type="Bgee" id="ENSMUSG00000114245">
    <property type="expression patterns" value="Expressed in stomach and 20 other cell types or tissues"/>
</dbReference>
<dbReference type="GO" id="GO:0048546">
    <property type="term" value="P:digestive tract morphogenesis"/>
    <property type="evidence" value="ECO:0000315"/>
    <property type="project" value="UniProtKB"/>
</dbReference>
<dbReference type="GO" id="GO:0035883">
    <property type="term" value="P:enteroendocrine cell differentiation"/>
    <property type="evidence" value="ECO:0000314"/>
    <property type="project" value="UniProtKB"/>
</dbReference>
<dbReference type="InterPro" id="IPR053819">
    <property type="entry name" value="TEADIR3_omega_loop"/>
</dbReference>
<dbReference type="Pfam" id="PF15238">
    <property type="entry name" value="TEADIR3"/>
    <property type="match status" value="1"/>
</dbReference>
<protein>
    <recommendedName>
        <fullName evidence="4">Protein PERCC1</fullName>
    </recommendedName>
    <alternativeName>
        <fullName evidence="3">Proline and glutamage-rich protein with a coiled coil domain</fullName>
    </alternativeName>
</protein>
<accession>A0A286YDK6</accession>
<name>PERC1_MOUSE</name>
<gene>
    <name evidence="3" type="primary">Percc1</name>
    <name evidence="6" type="synonym">Gm38655</name>
</gene>
<proteinExistence type="evidence at transcript level"/>
<feature type="chain" id="PRO_0000447992" description="Protein PERCC1">
    <location>
        <begin position="1"/>
        <end position="273"/>
    </location>
</feature>
<feature type="region of interest" description="Disordered" evidence="1">
    <location>
        <begin position="18"/>
        <end position="84"/>
    </location>
</feature>
<feature type="region of interest" description="Disordered" evidence="1">
    <location>
        <begin position="253"/>
        <end position="273"/>
    </location>
</feature>
<feature type="compositionally biased region" description="Acidic residues" evidence="1">
    <location>
        <begin position="28"/>
        <end position="56"/>
    </location>
</feature>
<feature type="compositionally biased region" description="Polar residues" evidence="1">
    <location>
        <begin position="67"/>
        <end position="83"/>
    </location>
</feature>
<keyword id="KW-0217">Developmental protein</keyword>
<keyword id="KW-1185">Reference proteome</keyword>
<comment type="function">
    <text evidence="2">Plays a critical role in intestinal function by promoting the development of enteroendocrine cells (EECs) of the gastrointestinal tract and pancreas (PubMed:31217582). It is thereby required for normal enteroendocrine peptide hormone secretion (PubMed:31217582).</text>
</comment>
<comment type="tissue specificity">
    <text evidence="2">Specifically expressed in the stomach, pancreas and intestine (PubMed:31217582). In gastrointestinal tissue, expression is primarily restricted to gastric G cells and duodenal enteroendocrine cells (EECs) (PubMed:31217582).</text>
</comment>
<comment type="disruption phenotype">
    <text evidence="2">Mice were born at the expected Mendelian frequency and do not show gross phenotypes at birth (PubMed:31217582). within the first days of life, mice however display reduced size, low body weight and substantially decreased survival (PubMed:31217582). Examination of fecal pellets and internal organs reveal abnormal digestive-tract function, as well as changes in the composition of the intestinal microbiome (PubMed:31217582). Defects are caused by impaired expression of gastrointestinal peptide hormones and development of enteroendocrine cells (EECs) (PubMed:31217582).</text>
</comment>